<feature type="signal peptide" evidence="15">
    <location>
        <begin position="1"/>
        <end position="18"/>
    </location>
</feature>
<feature type="chain" id="PRO_0000004226" description="Carbonic anhydrase 4">
    <location>
        <begin position="19"/>
        <end position="284"/>
    </location>
</feature>
<feature type="propeptide" id="PRO_0000004227" description="Removed in mature form" evidence="16">
    <location>
        <begin position="285"/>
        <end position="312"/>
    </location>
</feature>
<feature type="domain" description="Alpha-carbonic anhydrase" evidence="2">
    <location>
        <begin position="21"/>
        <end position="285"/>
    </location>
</feature>
<feature type="active site" description="Proton donor/acceptor" evidence="1">
    <location>
        <position position="88"/>
    </location>
</feature>
<feature type="binding site" evidence="18">
    <location>
        <position position="115"/>
    </location>
    <ligand>
        <name>Zn(2+)</name>
        <dbReference type="ChEBI" id="CHEBI:29105"/>
        <note>catalytic</note>
    </ligand>
</feature>
<feature type="binding site" evidence="18">
    <location>
        <position position="117"/>
    </location>
    <ligand>
        <name>Zn(2+)</name>
        <dbReference type="ChEBI" id="CHEBI:29105"/>
        <note>catalytic</note>
    </ligand>
</feature>
<feature type="binding site" evidence="18">
    <location>
        <position position="140"/>
    </location>
    <ligand>
        <name>Zn(2+)</name>
        <dbReference type="ChEBI" id="CHEBI:29105"/>
        <note>catalytic</note>
    </ligand>
</feature>
<feature type="binding site" evidence="1">
    <location>
        <begin position="225"/>
        <end position="226"/>
    </location>
    <ligand>
        <name>substrate</name>
    </ligand>
</feature>
<feature type="lipid moiety-binding region" description="GPI-anchor amidated serine" evidence="16">
    <location>
        <position position="284"/>
    </location>
</feature>
<feature type="disulfide bond" evidence="17">
    <location>
        <begin position="24"/>
        <end position="36"/>
    </location>
</feature>
<feature type="disulfide bond" evidence="17">
    <location>
        <begin position="46"/>
        <end position="229"/>
    </location>
</feature>
<feature type="splice variant" id="VSP_055973" description="In isoform 2." evidence="19">
    <original>VMMLLENKASISGGGLP</original>
    <variation>GWNPGERGLPATGGGTV</variation>
    <location>
        <begin position="90"/>
        <end position="106"/>
    </location>
</feature>
<feature type="splice variant" id="VSP_055974" description="In isoform 2." evidence="19">
    <location>
        <begin position="107"/>
        <end position="312"/>
    </location>
</feature>
<feature type="sequence variant" id="VAR_071430" description="In RP17; dbSNP:rs1245199379." evidence="14">
    <original>A</original>
    <variation>T</variation>
    <location>
        <position position="12"/>
    </location>
</feature>
<feature type="sequence variant" id="VAR_024749" description="In RP17; abolishes interaction with SLC4A4; impaired SLC4A4 cotransporter activity stimulation; dbSNP:rs104894559." evidence="3">
    <original>R</original>
    <variation>W</variation>
    <location>
        <position position="14"/>
    </location>
</feature>
<feature type="sequence variant" id="VAR_071431" description="In RP17; has no effect on carbonate dehydratase activity; loss of interaction with SLC4A4; dbSNP:rs121434552." evidence="8">
    <original>R</original>
    <variation>H</variation>
    <location>
        <position position="69"/>
    </location>
</feature>
<feature type="sequence variant" id="VAR_071432" description="In dbSNP:rs185942554." evidence="8">
    <original>N</original>
    <variation>K</variation>
    <location>
        <position position="177"/>
    </location>
</feature>
<feature type="sequence variant" id="VAR_024750" description="In RP17; abolishes carbonate dehydratase activity; impaired SLC4A4 cotransporter activity stimulation; dbSNP:rs121434551." evidence="3">
    <original>R</original>
    <variation>S</variation>
    <location>
        <position position="219"/>
    </location>
</feature>
<feature type="sequence variant" id="VAR_048680" description="In dbSNP:rs2229178.">
    <original>V</original>
    <variation>L</variation>
    <location>
        <position position="237"/>
    </location>
</feature>
<feature type="mutagenesis site" description="Loss of C-terminal domain removal and abolishes carbonate dehydratase activity." evidence="16">
    <original>S</original>
    <variation>F</variation>
    <location>
        <position position="284"/>
    </location>
</feature>
<feature type="sequence conflict" description="In Ref. 8; AA sequence." evidence="20" ref="8">
    <original>C</original>
    <variation>E</variation>
    <location>
        <position position="24"/>
    </location>
</feature>
<feature type="helix" evidence="23">
    <location>
        <begin position="26"/>
        <end position="29"/>
    </location>
</feature>
<feature type="helix" evidence="23">
    <location>
        <begin position="39"/>
        <end position="41"/>
    </location>
</feature>
<feature type="turn" evidence="23">
    <location>
        <begin position="44"/>
        <end position="47"/>
    </location>
</feature>
<feature type="strand" evidence="23">
    <location>
        <begin position="48"/>
        <end position="50"/>
    </location>
</feature>
<feature type="helix" evidence="23">
    <location>
        <begin position="58"/>
        <end position="60"/>
    </location>
</feature>
<feature type="strand" evidence="23">
    <location>
        <begin position="61"/>
        <end position="63"/>
    </location>
</feature>
<feature type="strand" evidence="23">
    <location>
        <begin position="70"/>
        <end position="77"/>
    </location>
</feature>
<feature type="strand" evidence="23">
    <location>
        <begin position="82"/>
        <end position="85"/>
    </location>
</feature>
<feature type="strand" evidence="23">
    <location>
        <begin position="87"/>
        <end position="93"/>
    </location>
</feature>
<feature type="strand" evidence="23">
    <location>
        <begin position="99"/>
        <end position="102"/>
    </location>
</feature>
<feature type="strand" evidence="23">
    <location>
        <begin position="109"/>
        <end position="118"/>
    </location>
</feature>
<feature type="turn" evidence="24">
    <location>
        <begin position="122"/>
        <end position="124"/>
    </location>
</feature>
<feature type="strand" evidence="23">
    <location>
        <begin position="127"/>
        <end position="130"/>
    </location>
</feature>
<feature type="strand" evidence="23">
    <location>
        <begin position="136"/>
        <end position="145"/>
    </location>
</feature>
<feature type="helix" evidence="25">
    <location>
        <begin position="153"/>
        <end position="157"/>
    </location>
</feature>
<feature type="strand" evidence="23">
    <location>
        <begin position="162"/>
        <end position="175"/>
    </location>
</feature>
<feature type="helix" evidence="23">
    <location>
        <begin position="178"/>
        <end position="180"/>
    </location>
</feature>
<feature type="helix" evidence="23">
    <location>
        <begin position="181"/>
        <end position="186"/>
    </location>
</feature>
<feature type="helix" evidence="23">
    <location>
        <begin position="187"/>
        <end position="189"/>
    </location>
</feature>
<feature type="strand" evidence="23">
    <location>
        <begin position="196"/>
        <end position="198"/>
    </location>
</feature>
<feature type="helix" evidence="23">
    <location>
        <begin position="205"/>
        <end position="207"/>
    </location>
</feature>
<feature type="helix" evidence="23">
    <location>
        <begin position="211"/>
        <end position="214"/>
    </location>
</feature>
<feature type="strand" evidence="23">
    <location>
        <begin position="217"/>
        <end position="222"/>
    </location>
</feature>
<feature type="strand" evidence="23">
    <location>
        <begin position="233"/>
        <end position="240"/>
    </location>
</feature>
<feature type="strand" evidence="23">
    <location>
        <begin position="242"/>
        <end position="245"/>
    </location>
</feature>
<feature type="helix" evidence="23">
    <location>
        <begin position="246"/>
        <end position="255"/>
    </location>
</feature>
<feature type="strand" evidence="23">
    <location>
        <begin position="257"/>
        <end position="259"/>
    </location>
</feature>
<feature type="strand" evidence="25">
    <location>
        <begin position="264"/>
        <end position="266"/>
    </location>
</feature>
<evidence type="ECO:0000250" key="1">
    <source>
        <dbReference type="UniProtKB" id="P00918"/>
    </source>
</evidence>
<evidence type="ECO:0000255" key="2">
    <source>
        <dbReference type="PROSITE-ProRule" id="PRU01134"/>
    </source>
</evidence>
<evidence type="ECO:0000269" key="3">
    <source>
    </source>
</evidence>
<evidence type="ECO:0000269" key="4">
    <source>
    </source>
</evidence>
<evidence type="ECO:0000269" key="5">
    <source>
    </source>
</evidence>
<evidence type="ECO:0000269" key="6">
    <source>
    </source>
</evidence>
<evidence type="ECO:0000269" key="7">
    <source>
    </source>
</evidence>
<evidence type="ECO:0000269" key="8">
    <source>
    </source>
</evidence>
<evidence type="ECO:0000269" key="9">
    <source>
    </source>
</evidence>
<evidence type="ECO:0000269" key="10">
    <source>
    </source>
</evidence>
<evidence type="ECO:0000269" key="11">
    <source>
    </source>
</evidence>
<evidence type="ECO:0000269" key="12">
    <source>
    </source>
</evidence>
<evidence type="ECO:0000269" key="13">
    <source>
    </source>
</evidence>
<evidence type="ECO:0000269" key="14">
    <source>
    </source>
</evidence>
<evidence type="ECO:0000269" key="15">
    <source>
    </source>
</evidence>
<evidence type="ECO:0000269" key="16">
    <source>
    </source>
</evidence>
<evidence type="ECO:0000269" key="17">
    <source>
    </source>
</evidence>
<evidence type="ECO:0000269" key="18">
    <source>
    </source>
</evidence>
<evidence type="ECO:0000303" key="19">
    <source>
    </source>
</evidence>
<evidence type="ECO:0000305" key="20"/>
<evidence type="ECO:0000305" key="21">
    <source>
    </source>
</evidence>
<evidence type="ECO:0000312" key="22">
    <source>
        <dbReference type="HGNC" id="HGNC:1375"/>
    </source>
</evidence>
<evidence type="ECO:0007829" key="23">
    <source>
        <dbReference type="PDB" id="3FW3"/>
    </source>
</evidence>
<evidence type="ECO:0007829" key="24">
    <source>
        <dbReference type="PDB" id="5IPZ"/>
    </source>
</evidence>
<evidence type="ECO:0007829" key="25">
    <source>
        <dbReference type="PDB" id="5KU6"/>
    </source>
</evidence>
<organism>
    <name type="scientific">Homo sapiens</name>
    <name type="common">Human</name>
    <dbReference type="NCBI Taxonomy" id="9606"/>
    <lineage>
        <taxon>Eukaryota</taxon>
        <taxon>Metazoa</taxon>
        <taxon>Chordata</taxon>
        <taxon>Craniata</taxon>
        <taxon>Vertebrata</taxon>
        <taxon>Euteleostomi</taxon>
        <taxon>Mammalia</taxon>
        <taxon>Eutheria</taxon>
        <taxon>Euarchontoglires</taxon>
        <taxon>Primates</taxon>
        <taxon>Haplorrhini</taxon>
        <taxon>Catarrhini</taxon>
        <taxon>Hominidae</taxon>
        <taxon>Homo</taxon>
    </lineage>
</organism>
<accession>P22748</accession>
<accession>B4DQA4</accession>
<accession>Q6FHI7</accession>
<sequence length="312" mass="35032">MRMLLALLALSAARPSASAESHWCYEVQAESSNYPCLVPVKWGGNCQKDRQSPINIVTTKAKVDKKLGRFFFSGYDKKQTWTVQNNGHSVMMLLENKASISGGGLPAPYQAKQLHLHWSDLPYKGSEHSLDGEHFAMEMHIVHEKEKGTSRNVKEAQDPEDEIAVLAFLVEAGTQVNEGFQPLVEALSNIPKPEMSTTMAESSLLDLLPKEEKLRHYFRYLGSLTTPTCDEKVVWTVFREPIQLHREQILAFSQKLYYDKEQTVSMKDNVRPLQQLGQRTVIKSGAPGRPLPWALPALLGPMLACLLAGFLR</sequence>
<dbReference type="EC" id="4.2.1.1" evidence="3 4 5 6 8 9 16"/>
<dbReference type="EMBL" id="M83670">
    <property type="protein sequence ID" value="AAA35630.1"/>
    <property type="molecule type" value="mRNA"/>
</dbReference>
<dbReference type="EMBL" id="L10955">
    <property type="protein sequence ID" value="AAA35625.1"/>
    <property type="status" value="ALT_SEQ"/>
    <property type="molecule type" value="Genomic_DNA"/>
</dbReference>
<dbReference type="EMBL" id="L10951">
    <property type="protein sequence ID" value="AAA35625.1"/>
    <property type="status" value="JOINED"/>
    <property type="molecule type" value="Genomic_DNA"/>
</dbReference>
<dbReference type="EMBL" id="L10953">
    <property type="protein sequence ID" value="AAA35625.1"/>
    <property type="status" value="JOINED"/>
    <property type="molecule type" value="Genomic_DNA"/>
</dbReference>
<dbReference type="EMBL" id="L10954">
    <property type="protein sequence ID" value="AAA35625.1"/>
    <property type="status" value="JOINED"/>
    <property type="molecule type" value="Genomic_DNA"/>
</dbReference>
<dbReference type="EMBL" id="L10955">
    <property type="protein sequence ID" value="AAA35626.1"/>
    <property type="status" value="ALT_SEQ"/>
    <property type="molecule type" value="Genomic_DNA"/>
</dbReference>
<dbReference type="EMBL" id="L10954">
    <property type="protein sequence ID" value="AAA35626.1"/>
    <property type="status" value="JOINED"/>
    <property type="molecule type" value="Genomic_DNA"/>
</dbReference>
<dbReference type="EMBL" id="AK289715">
    <property type="protein sequence ID" value="BAF82404.1"/>
    <property type="molecule type" value="mRNA"/>
</dbReference>
<dbReference type="EMBL" id="AK298710">
    <property type="protein sequence ID" value="BAG60866.1"/>
    <property type="molecule type" value="mRNA"/>
</dbReference>
<dbReference type="EMBL" id="CR541766">
    <property type="protein sequence ID" value="CAG46565.1"/>
    <property type="molecule type" value="mRNA"/>
</dbReference>
<dbReference type="EMBL" id="AC025048">
    <property type="status" value="NOT_ANNOTATED_CDS"/>
    <property type="molecule type" value="Genomic_DNA"/>
</dbReference>
<dbReference type="EMBL" id="CH471109">
    <property type="protein sequence ID" value="EAW94362.1"/>
    <property type="molecule type" value="Genomic_DNA"/>
</dbReference>
<dbReference type="EMBL" id="BC057792">
    <property type="protein sequence ID" value="AAH57792.1"/>
    <property type="molecule type" value="mRNA"/>
</dbReference>
<dbReference type="EMBL" id="BC069649">
    <property type="protein sequence ID" value="AAH69649.1"/>
    <property type="molecule type" value="mRNA"/>
</dbReference>
<dbReference type="EMBL" id="BC074768">
    <property type="protein sequence ID" value="AAH74768.1"/>
    <property type="molecule type" value="mRNA"/>
</dbReference>
<dbReference type="CCDS" id="CCDS11624.1">
    <molecule id="P22748-1"/>
</dbReference>
<dbReference type="PIR" id="A45745">
    <property type="entry name" value="CRHU4"/>
</dbReference>
<dbReference type="RefSeq" id="NP_000708.1">
    <molecule id="P22748-1"/>
    <property type="nucleotide sequence ID" value="NM_000717.5"/>
</dbReference>
<dbReference type="RefSeq" id="XP_016880501.1">
    <property type="nucleotide sequence ID" value="XM_017025012.1"/>
</dbReference>
<dbReference type="RefSeq" id="XP_047292609.1">
    <molecule id="P22748-1"/>
    <property type="nucleotide sequence ID" value="XM_047436653.1"/>
</dbReference>
<dbReference type="RefSeq" id="XP_047292610.1">
    <molecule id="P22748-1"/>
    <property type="nucleotide sequence ID" value="XM_047436654.1"/>
</dbReference>
<dbReference type="RefSeq" id="XP_047292611.1">
    <molecule id="P22748-1"/>
    <property type="nucleotide sequence ID" value="XM_047436655.1"/>
</dbReference>
<dbReference type="RefSeq" id="XP_047292612.1">
    <molecule id="P22748-1"/>
    <property type="nucleotide sequence ID" value="XM_047436656.1"/>
</dbReference>
<dbReference type="RefSeq" id="XP_054173033.1">
    <molecule id="P22748-1"/>
    <property type="nucleotide sequence ID" value="XM_054317058.1"/>
</dbReference>
<dbReference type="RefSeq" id="XP_054173034.1">
    <molecule id="P22748-1"/>
    <property type="nucleotide sequence ID" value="XM_054317059.1"/>
</dbReference>
<dbReference type="RefSeq" id="XP_054173035.1">
    <molecule id="P22748-1"/>
    <property type="nucleotide sequence ID" value="XM_054317060.1"/>
</dbReference>
<dbReference type="RefSeq" id="XP_054173036.1">
    <molecule id="P22748-1"/>
    <property type="nucleotide sequence ID" value="XM_054317061.1"/>
</dbReference>
<dbReference type="PDB" id="1ZNC">
    <property type="method" value="X-ray"/>
    <property type="resolution" value="2.80 A"/>
    <property type="chains" value="A/B=19-284"/>
</dbReference>
<dbReference type="PDB" id="3F7B">
    <property type="method" value="X-ray"/>
    <property type="resolution" value="2.05 A"/>
    <property type="chains" value="A/B=19-284"/>
</dbReference>
<dbReference type="PDB" id="3F7U">
    <property type="method" value="X-ray"/>
    <property type="resolution" value="2.00 A"/>
    <property type="chains" value="A/B/C/D=19-284"/>
</dbReference>
<dbReference type="PDB" id="3FW3">
    <property type="method" value="X-ray"/>
    <property type="resolution" value="1.72 A"/>
    <property type="chains" value="A/B=19-284"/>
</dbReference>
<dbReference type="PDB" id="5IPZ">
    <property type="method" value="X-ray"/>
    <property type="resolution" value="2.10 A"/>
    <property type="chains" value="A/B/C/D=19-284"/>
</dbReference>
<dbReference type="PDB" id="5JN8">
    <property type="method" value="X-ray"/>
    <property type="resolution" value="1.85 A"/>
    <property type="chains" value="A/B/C/D=19-284"/>
</dbReference>
<dbReference type="PDB" id="5JN9">
    <property type="method" value="X-ray"/>
    <property type="resolution" value="2.10 A"/>
    <property type="chains" value="A/B/C/D=19-284"/>
</dbReference>
<dbReference type="PDB" id="5JNA">
    <property type="method" value="X-ray"/>
    <property type="resolution" value="2.00 A"/>
    <property type="chains" value="A/B/C/D=19-284"/>
</dbReference>
<dbReference type="PDB" id="5JNC">
    <property type="method" value="X-ray"/>
    <property type="resolution" value="2.00 A"/>
    <property type="chains" value="A/B/C/D=19-284"/>
</dbReference>
<dbReference type="PDB" id="5KU6">
    <property type="method" value="X-ray"/>
    <property type="resolution" value="1.80 A"/>
    <property type="chains" value="A/B/C/D=19-284"/>
</dbReference>
<dbReference type="PDBsum" id="1ZNC"/>
<dbReference type="PDBsum" id="3F7B"/>
<dbReference type="PDBsum" id="3F7U"/>
<dbReference type="PDBsum" id="3FW3"/>
<dbReference type="PDBsum" id="5IPZ"/>
<dbReference type="PDBsum" id="5JN8"/>
<dbReference type="PDBsum" id="5JN9"/>
<dbReference type="PDBsum" id="5JNA"/>
<dbReference type="PDBsum" id="5JNC"/>
<dbReference type="PDBsum" id="5KU6"/>
<dbReference type="SMR" id="P22748"/>
<dbReference type="BioGRID" id="107217">
    <property type="interactions" value="11"/>
</dbReference>
<dbReference type="FunCoup" id="P22748">
    <property type="interactions" value="182"/>
</dbReference>
<dbReference type="IntAct" id="P22748">
    <property type="interactions" value="9"/>
</dbReference>
<dbReference type="STRING" id="9606.ENSP00000300900"/>
<dbReference type="BindingDB" id="P22748"/>
<dbReference type="ChEMBL" id="CHEMBL3729"/>
<dbReference type="DrugBank" id="DB02232">
    <property type="generic name" value="1,2-Dihydroxybenzene"/>
</dbReference>
<dbReference type="DrugBank" id="DB08782">
    <property type="generic name" value="4-(2-AMINOETHYL)BENZENESULFONAMIDE"/>
</dbReference>
<dbReference type="DrugBank" id="DB07050">
    <property type="generic name" value="5-[(phenylsulfonyl)amino]-1,3,4-thiadiazole-2-sulfonamide"/>
</dbReference>
<dbReference type="DrugBank" id="DB00819">
    <property type="generic name" value="Acetazolamide"/>
</dbReference>
<dbReference type="DrugBank" id="DB00436">
    <property type="generic name" value="Bendroflumethiazide"/>
</dbReference>
<dbReference type="DrugBank" id="DB00562">
    <property type="generic name" value="Benzthiazide"/>
</dbReference>
<dbReference type="DrugBank" id="DB01194">
    <property type="generic name" value="Brinzolamide"/>
</dbReference>
<dbReference type="DrugBank" id="DB03854">
    <property type="generic name" value="Cadaverine"/>
</dbReference>
<dbReference type="DrugBank" id="DB14086">
    <property type="generic name" value="Cianidanol"/>
</dbReference>
<dbReference type="DrugBank" id="DB04665">
    <property type="generic name" value="Coumarin"/>
</dbReference>
<dbReference type="DrugBank" id="DB11672">
    <property type="generic name" value="Curcumin"/>
</dbReference>
<dbReference type="DrugBank" id="DB00606">
    <property type="generic name" value="Cyclothiazide"/>
</dbReference>
<dbReference type="DrugBank" id="DB01144">
    <property type="generic name" value="Diclofenamide"/>
</dbReference>
<dbReference type="DrugBank" id="DB00869">
    <property type="generic name" value="Dorzolamide"/>
</dbReference>
<dbReference type="DrugBank" id="DB08846">
    <property type="generic name" value="Ellagic acid"/>
</dbReference>
<dbReference type="DrugBank" id="DB00311">
    <property type="generic name" value="Ethoxzolamide"/>
</dbReference>
<dbReference type="DrugBank" id="DB07767">
    <property type="generic name" value="Ferulic acid"/>
</dbReference>
<dbReference type="DrugBank" id="DB03260">
    <property type="generic name" value="Hexamethylene diamine"/>
</dbReference>
<dbReference type="DrugBank" id="DB00774">
    <property type="generic name" value="Hydroflumethiazide"/>
</dbReference>
<dbReference type="DrugBank" id="DB06795">
    <property type="generic name" value="Mafenide"/>
</dbReference>
<dbReference type="DrugBank" id="DB00703">
    <property type="generic name" value="Methazolamide"/>
</dbReference>
<dbReference type="DrugBank" id="DB00232">
    <property type="generic name" value="Methyclothiazide"/>
</dbReference>
<dbReference type="DrugBank" id="DB04066">
    <property type="generic name" value="p-Coumaric acid"/>
</dbReference>
<dbReference type="DrugBank" id="DB03255">
    <property type="generic name" value="Phenol"/>
</dbReference>
<dbReference type="DrugBank" id="DB01795">
    <property type="generic name" value="Phenylboronic acid"/>
</dbReference>
<dbReference type="DrugBank" id="DB00119">
    <property type="generic name" value="Pyruvic acid"/>
</dbReference>
<dbReference type="DrugBank" id="DB00936">
    <property type="generic name" value="Salicylic acid"/>
</dbReference>
<dbReference type="DrugBank" id="DB09460">
    <property type="generic name" value="Sodium carbonate"/>
</dbReference>
<dbReference type="DrugBank" id="DB09154">
    <property type="generic name" value="Sodium citrate"/>
</dbReference>
<dbReference type="DrugBank" id="DB14502">
    <property type="generic name" value="Sodium phosphate, dibasic"/>
</dbReference>
<dbReference type="DrugBank" id="DB00127">
    <property type="generic name" value="Spermine"/>
</dbReference>
<dbReference type="DrugBank" id="DB00273">
    <property type="generic name" value="Topiramate"/>
</dbReference>
<dbReference type="DrugBank" id="DB01021">
    <property type="generic name" value="Trichlormethiazide"/>
</dbReference>
<dbReference type="DrugBank" id="DB00909">
    <property type="generic name" value="Zonisamide"/>
</dbReference>
<dbReference type="DrugCentral" id="P22748"/>
<dbReference type="GuidetoPHARMACOLOGY" id="2599"/>
<dbReference type="iPTMnet" id="P22748"/>
<dbReference type="PhosphoSitePlus" id="P22748"/>
<dbReference type="BioMuta" id="CA4"/>
<dbReference type="DMDM" id="115465"/>
<dbReference type="jPOST" id="P22748"/>
<dbReference type="MassIVE" id="P22748"/>
<dbReference type="PaxDb" id="9606-ENSP00000300900"/>
<dbReference type="PeptideAtlas" id="P22748"/>
<dbReference type="ProteomicsDB" id="54034">
    <molecule id="P22748-1"/>
</dbReference>
<dbReference type="Antibodypedia" id="2592">
    <property type="antibodies" value="303 antibodies from 34 providers"/>
</dbReference>
<dbReference type="DNASU" id="762"/>
<dbReference type="Ensembl" id="ENST00000300900.9">
    <molecule id="P22748-1"/>
    <property type="protein sequence ID" value="ENSP00000300900.3"/>
    <property type="gene ID" value="ENSG00000167434.10"/>
</dbReference>
<dbReference type="Ensembl" id="ENST00000586876.1">
    <molecule id="P22748-2"/>
    <property type="protein sequence ID" value="ENSP00000467465.1"/>
    <property type="gene ID" value="ENSG00000167434.10"/>
</dbReference>
<dbReference type="GeneID" id="762"/>
<dbReference type="KEGG" id="hsa:762"/>
<dbReference type="MANE-Select" id="ENST00000300900.9">
    <property type="protein sequence ID" value="ENSP00000300900.3"/>
    <property type="RefSeq nucleotide sequence ID" value="NM_000717.5"/>
    <property type="RefSeq protein sequence ID" value="NP_000708.1"/>
</dbReference>
<dbReference type="UCSC" id="uc002iym.5">
    <molecule id="P22748-1"/>
    <property type="organism name" value="human"/>
</dbReference>
<dbReference type="AGR" id="HGNC:1375"/>
<dbReference type="CTD" id="762"/>
<dbReference type="DisGeNET" id="762"/>
<dbReference type="GeneCards" id="CA4"/>
<dbReference type="GeneReviews" id="CA4"/>
<dbReference type="HGNC" id="HGNC:1375">
    <property type="gene designation" value="CA4"/>
</dbReference>
<dbReference type="HPA" id="ENSG00000167434">
    <property type="expression patterns" value="Tissue enhanced (intestine)"/>
</dbReference>
<dbReference type="MalaCards" id="CA4"/>
<dbReference type="MIM" id="114760">
    <property type="type" value="gene"/>
</dbReference>
<dbReference type="MIM" id="600852">
    <property type="type" value="phenotype"/>
</dbReference>
<dbReference type="neXtProt" id="NX_P22748"/>
<dbReference type="OpenTargets" id="ENSG00000167434"/>
<dbReference type="Orphanet" id="791">
    <property type="disease" value="Retinitis pigmentosa"/>
</dbReference>
<dbReference type="PharmGKB" id="PA25991"/>
<dbReference type="VEuPathDB" id="HostDB:ENSG00000167434"/>
<dbReference type="eggNOG" id="KOG0382">
    <property type="taxonomic scope" value="Eukaryota"/>
</dbReference>
<dbReference type="GeneTree" id="ENSGT00940000155690"/>
<dbReference type="HOGENOM" id="CLU_039326_2_2_1"/>
<dbReference type="InParanoid" id="P22748"/>
<dbReference type="OMA" id="AVEFHLH"/>
<dbReference type="OrthoDB" id="429145at2759"/>
<dbReference type="PAN-GO" id="P22748">
    <property type="GO annotations" value="3 GO annotations based on evolutionary models"/>
</dbReference>
<dbReference type="PhylomeDB" id="P22748"/>
<dbReference type="TreeFam" id="TF316425"/>
<dbReference type="BRENDA" id="4.2.1.1">
    <property type="organism ID" value="2681"/>
</dbReference>
<dbReference type="PathwayCommons" id="P22748"/>
<dbReference type="Reactome" id="R-HSA-1237044">
    <property type="pathway name" value="Erythrocytes take up carbon dioxide and release oxygen"/>
</dbReference>
<dbReference type="Reactome" id="R-HSA-1247673">
    <property type="pathway name" value="Erythrocytes take up oxygen and release carbon dioxide"/>
</dbReference>
<dbReference type="Reactome" id="R-HSA-1475029">
    <property type="pathway name" value="Reversible hydration of carbon dioxide"/>
</dbReference>
<dbReference type="SABIO-RK" id="P22748"/>
<dbReference type="SignaLink" id="P22748"/>
<dbReference type="BioGRID-ORCS" id="762">
    <property type="hits" value="18 hits in 1156 CRISPR screens"/>
</dbReference>
<dbReference type="CD-CODE" id="FB4E32DD">
    <property type="entry name" value="Presynaptic clusters and postsynaptic densities"/>
</dbReference>
<dbReference type="ChiTaRS" id="CA4">
    <property type="organism name" value="human"/>
</dbReference>
<dbReference type="EvolutionaryTrace" id="P22748"/>
<dbReference type="GeneWiki" id="Carbonic_anhydrase_4"/>
<dbReference type="GenomeRNAi" id="762"/>
<dbReference type="Pharos" id="P22748">
    <property type="development level" value="Tclin"/>
</dbReference>
<dbReference type="PRO" id="PR:P22748"/>
<dbReference type="Proteomes" id="UP000005640">
    <property type="component" value="Chromosome 17"/>
</dbReference>
<dbReference type="RNAct" id="P22748">
    <property type="molecule type" value="protein"/>
</dbReference>
<dbReference type="Bgee" id="ENSG00000167434">
    <property type="expression patterns" value="Expressed in mucosa of transverse colon and 178 other cell types or tissues"/>
</dbReference>
<dbReference type="ExpressionAtlas" id="P22748">
    <property type="expression patterns" value="baseline and differential"/>
</dbReference>
<dbReference type="GO" id="GO:0016324">
    <property type="term" value="C:apical plasma membrane"/>
    <property type="evidence" value="ECO:0000314"/>
    <property type="project" value="DFLAT"/>
</dbReference>
<dbReference type="GO" id="GO:0031526">
    <property type="term" value="C:brush border membrane"/>
    <property type="evidence" value="ECO:0000314"/>
    <property type="project" value="DFLAT"/>
</dbReference>
<dbReference type="GO" id="GO:0009986">
    <property type="term" value="C:cell surface"/>
    <property type="evidence" value="ECO:0000314"/>
    <property type="project" value="DFLAT"/>
</dbReference>
<dbReference type="GO" id="GO:0005793">
    <property type="term" value="C:endoplasmic reticulum-Golgi intermediate compartment"/>
    <property type="evidence" value="ECO:0000314"/>
    <property type="project" value="DFLAT"/>
</dbReference>
<dbReference type="GO" id="GO:0009897">
    <property type="term" value="C:external side of plasma membrane"/>
    <property type="evidence" value="ECO:0000314"/>
    <property type="project" value="DFLAT"/>
</dbReference>
<dbReference type="GO" id="GO:0070062">
    <property type="term" value="C:extracellular exosome"/>
    <property type="evidence" value="ECO:0000314"/>
    <property type="project" value="UniProtKB"/>
</dbReference>
<dbReference type="GO" id="GO:0005794">
    <property type="term" value="C:Golgi apparatus"/>
    <property type="evidence" value="ECO:0000314"/>
    <property type="project" value="DFLAT"/>
</dbReference>
<dbReference type="GO" id="GO:0016020">
    <property type="term" value="C:membrane"/>
    <property type="evidence" value="ECO:0000304"/>
    <property type="project" value="ProtInc"/>
</dbReference>
<dbReference type="GO" id="GO:0048471">
    <property type="term" value="C:perinuclear region of cytoplasm"/>
    <property type="evidence" value="ECO:0000314"/>
    <property type="project" value="DFLAT"/>
</dbReference>
<dbReference type="GO" id="GO:0005886">
    <property type="term" value="C:plasma membrane"/>
    <property type="evidence" value="ECO:0000314"/>
    <property type="project" value="UniProtKB"/>
</dbReference>
<dbReference type="GO" id="GO:0005791">
    <property type="term" value="C:rough endoplasmic reticulum"/>
    <property type="evidence" value="ECO:0000314"/>
    <property type="project" value="DFLAT"/>
</dbReference>
<dbReference type="GO" id="GO:0030667">
    <property type="term" value="C:secretory granule membrane"/>
    <property type="evidence" value="ECO:0000314"/>
    <property type="project" value="DFLAT"/>
</dbReference>
<dbReference type="GO" id="GO:0005802">
    <property type="term" value="C:trans-Golgi network"/>
    <property type="evidence" value="ECO:0000314"/>
    <property type="project" value="DFLAT"/>
</dbReference>
<dbReference type="GO" id="GO:0030658">
    <property type="term" value="C:transport vesicle membrane"/>
    <property type="evidence" value="ECO:0000314"/>
    <property type="project" value="DFLAT"/>
</dbReference>
<dbReference type="GO" id="GO:0004089">
    <property type="term" value="F:carbonate dehydratase activity"/>
    <property type="evidence" value="ECO:0000318"/>
    <property type="project" value="GO_Central"/>
</dbReference>
<dbReference type="GO" id="GO:0008270">
    <property type="term" value="F:zinc ion binding"/>
    <property type="evidence" value="ECO:0007669"/>
    <property type="project" value="InterPro"/>
</dbReference>
<dbReference type="GO" id="GO:0015701">
    <property type="term" value="P:bicarbonate transport"/>
    <property type="evidence" value="ECO:0000315"/>
    <property type="project" value="DFLAT"/>
</dbReference>
<dbReference type="CDD" id="cd03117">
    <property type="entry name" value="alpha_CA_IV_XV_like"/>
    <property type="match status" value="1"/>
</dbReference>
<dbReference type="FunFam" id="3.10.200.10:FF:000003">
    <property type="entry name" value="Carbonic anhydrase 12"/>
    <property type="match status" value="1"/>
</dbReference>
<dbReference type="Gene3D" id="3.10.200.10">
    <property type="entry name" value="Alpha carbonic anhydrase"/>
    <property type="match status" value="1"/>
</dbReference>
<dbReference type="InterPro" id="IPR041874">
    <property type="entry name" value="CA4/CA15"/>
</dbReference>
<dbReference type="InterPro" id="IPR001148">
    <property type="entry name" value="CA_dom"/>
</dbReference>
<dbReference type="InterPro" id="IPR036398">
    <property type="entry name" value="CA_dom_sf"/>
</dbReference>
<dbReference type="InterPro" id="IPR023561">
    <property type="entry name" value="Carbonic_anhydrase_a-class"/>
</dbReference>
<dbReference type="InterPro" id="IPR018338">
    <property type="entry name" value="Carbonic_anhydrase_a-class_CS"/>
</dbReference>
<dbReference type="PANTHER" id="PTHR18952">
    <property type="entry name" value="CARBONIC ANHYDRASE"/>
    <property type="match status" value="1"/>
</dbReference>
<dbReference type="PANTHER" id="PTHR18952:SF95">
    <property type="entry name" value="CARBONIC ANHYDRASE 4"/>
    <property type="match status" value="1"/>
</dbReference>
<dbReference type="Pfam" id="PF00194">
    <property type="entry name" value="Carb_anhydrase"/>
    <property type="match status" value="1"/>
</dbReference>
<dbReference type="SMART" id="SM01057">
    <property type="entry name" value="Carb_anhydrase"/>
    <property type="match status" value="1"/>
</dbReference>
<dbReference type="SUPFAM" id="SSF51069">
    <property type="entry name" value="Carbonic anhydrase"/>
    <property type="match status" value="1"/>
</dbReference>
<dbReference type="PROSITE" id="PS00162">
    <property type="entry name" value="ALPHA_CA_1"/>
    <property type="match status" value="1"/>
</dbReference>
<dbReference type="PROSITE" id="PS51144">
    <property type="entry name" value="ALPHA_CA_2"/>
    <property type="match status" value="1"/>
</dbReference>
<protein>
    <recommendedName>
        <fullName>Carbonic anhydrase 4</fullName>
        <ecNumber evidence="3 4 5 6 8 9 16">4.2.1.1</ecNumber>
    </recommendedName>
    <alternativeName>
        <fullName>Carbonate dehydratase IV</fullName>
    </alternativeName>
    <alternativeName>
        <fullName>Carbonic anhydrase IV</fullName>
        <shortName>CA-IV</shortName>
    </alternativeName>
</protein>
<gene>
    <name evidence="22" type="primary">CA4</name>
</gene>
<comment type="function">
    <text evidence="3 4 5 6 7 8 9 10 11 12 16">Catalyzes the reversible hydration of carbon dioxide into bicarbonate and protons and thus is essential to maintaining intracellular and extracellular pH (PubMed:15563508, PubMed:16686544, PubMed:16807956, PubMed:17127057, PubMed:17314045, PubMed:17652713, PubMed:17705204, PubMed:18618712, PubMed:19186056, PubMed:19206230, PubMed:7625839). May stimulate the sodium/bicarbonate transporter activity of SLC4A4 that acts in pH homeostasis (PubMed:15563508). It is essential for acid overload removal from the retina and retina epithelium, and acid release in the choriocapillaris in the choroid (PubMed:15563508).</text>
</comment>
<comment type="catalytic activity">
    <reaction evidence="3 4 5 6 7 8 9 10 11 12 16">
        <text>hydrogencarbonate + H(+) = CO2 + H2O</text>
        <dbReference type="Rhea" id="RHEA:10748"/>
        <dbReference type="ChEBI" id="CHEBI:15377"/>
        <dbReference type="ChEBI" id="CHEBI:15378"/>
        <dbReference type="ChEBI" id="CHEBI:16526"/>
        <dbReference type="ChEBI" id="CHEBI:17544"/>
        <dbReference type="EC" id="4.2.1.1"/>
    </reaction>
    <physiologicalReaction direction="left-to-right" evidence="21">
        <dbReference type="Rhea" id="RHEA:10749"/>
    </physiologicalReaction>
    <physiologicalReaction direction="right-to-left" evidence="21">
        <dbReference type="Rhea" id="RHEA:10750"/>
    </physiologicalReaction>
</comment>
<comment type="cofactor">
    <cofactor evidence="18">
        <name>Zn(2+)</name>
        <dbReference type="ChEBI" id="CHEBI:29105"/>
    </cofactor>
</comment>
<comment type="activity regulation">
    <text evidence="4 5 6 7 9 10 11 12">Activated by histamine, L-adrenaline, D-phenylalanine, L- and D-histidine. Inhibited by coumarins, saccharin, sulfonamide derivatives such as acetazolamide and Foscarnet (phosphonoformate trisodium salt).</text>
</comment>
<comment type="biophysicochemical properties">
    <kinetics>
        <KM evidence="10">21.5 mM for CO(2)</KM>
    </kinetics>
</comment>
<comment type="subunit">
    <text evidence="3 8 13 18">Interacts with SLC4A4.</text>
</comment>
<comment type="subcellular location">
    <subcellularLocation>
        <location evidence="3">Cell membrane</location>
        <topology evidence="16">Lipid-anchor</topology>
        <topology evidence="16">GPI-anchor</topology>
    </subcellularLocation>
</comment>
<comment type="alternative products">
    <event type="alternative splicing"/>
    <isoform>
        <id>P22748-1</id>
        <name>1</name>
        <sequence type="displayed"/>
    </isoform>
    <isoform>
        <id>P22748-2</id>
        <name>2</name>
        <sequence type="described" ref="VSP_055973 VSP_055974"/>
    </isoform>
</comment>
<comment type="tissue specificity">
    <text evidence="3">Expressed in the endothelium of the choriocapillaris in eyes (at protein level). Not expressed in the retinal epithelium at detectable levels.</text>
</comment>
<comment type="disease" evidence="3 8 14">
    <disease id="DI-00983">
        <name>Retinitis pigmentosa 17</name>
        <acronym>RP17</acronym>
        <description>A retinal dystrophy belonging to the group of pigmentary retinopathies. Retinitis pigmentosa is characterized by retinal pigment deposits visible on fundus examination and primary loss of rod photoreceptor cells followed by secondary loss of cone photoreceptors. Patients typically have night vision blindness and loss of midperipheral visual field. As their condition progresses, they lose their far peripheral visual field and eventually central vision as well.</description>
        <dbReference type="MIM" id="600852"/>
    </disease>
    <text>The disease is caused by variants affecting the gene represented in this entry. Defective acid overload removal from retina and retinal epithelium, due to mutant CA4, is responsible for photoreceptor degeneration, indicating that impaired pH homeostasis is the most likely cause underlying the RP17 phenotype.</text>
</comment>
<comment type="similarity">
    <text evidence="20">Belongs to the alpha-carbonic anhydrase family.</text>
</comment>
<keyword id="KW-0002">3D-structure</keyword>
<keyword id="KW-0025">Alternative splicing</keyword>
<keyword id="KW-1003">Cell membrane</keyword>
<keyword id="KW-0903">Direct protein sequencing</keyword>
<keyword id="KW-0225">Disease variant</keyword>
<keyword id="KW-1015">Disulfide bond</keyword>
<keyword id="KW-0325">Glycoprotein</keyword>
<keyword id="KW-0336">GPI-anchor</keyword>
<keyword id="KW-0449">Lipoprotein</keyword>
<keyword id="KW-0456">Lyase</keyword>
<keyword id="KW-0472">Membrane</keyword>
<keyword id="KW-0479">Metal-binding</keyword>
<keyword id="KW-1267">Proteomics identification</keyword>
<keyword id="KW-1185">Reference proteome</keyword>
<keyword id="KW-0682">Retinitis pigmentosa</keyword>
<keyword id="KW-0732">Signal</keyword>
<keyword id="KW-0862">Zinc</keyword>
<proteinExistence type="evidence at protein level"/>
<name>CAH4_HUMAN</name>
<reference key="1">
    <citation type="journal article" date="1992" name="Proc. Natl. Acad. Sci. U.S.A.">
        <title>Human carbonic anhydrase IV: cDNA cloning, sequence comparison, and expression in COS cell membranes.</title>
        <authorList>
            <person name="Okuyama T."/>
            <person name="Sato S."/>
            <person name="Zhu X.L."/>
            <person name="Waheed A."/>
            <person name="Sly W.S."/>
        </authorList>
    </citation>
    <scope>NUCLEOTIDE SEQUENCE [MRNA] (ISOFORM 1)</scope>
</reference>
<reference key="2">
    <citation type="journal article" date="1993" name="Genomics">
        <title>Genomic organization and localization of gene for human carbonic anhydrase IV to chromosome 17q.</title>
        <authorList>
            <person name="Okuyama T."/>
            <person name="Batanian J.R."/>
            <person name="Sly W.S."/>
        </authorList>
    </citation>
    <scope>NUCLEOTIDE SEQUENCE [GENOMIC DNA]</scope>
</reference>
<reference key="3">
    <citation type="journal article" date="2004" name="Nat. Genet.">
        <title>Complete sequencing and characterization of 21,243 full-length human cDNAs.</title>
        <authorList>
            <person name="Ota T."/>
            <person name="Suzuki Y."/>
            <person name="Nishikawa T."/>
            <person name="Otsuki T."/>
            <person name="Sugiyama T."/>
            <person name="Irie R."/>
            <person name="Wakamatsu A."/>
            <person name="Hayashi K."/>
            <person name="Sato H."/>
            <person name="Nagai K."/>
            <person name="Kimura K."/>
            <person name="Makita H."/>
            <person name="Sekine M."/>
            <person name="Obayashi M."/>
            <person name="Nishi T."/>
            <person name="Shibahara T."/>
            <person name="Tanaka T."/>
            <person name="Ishii S."/>
            <person name="Yamamoto J."/>
            <person name="Saito K."/>
            <person name="Kawai Y."/>
            <person name="Isono Y."/>
            <person name="Nakamura Y."/>
            <person name="Nagahari K."/>
            <person name="Murakami K."/>
            <person name="Yasuda T."/>
            <person name="Iwayanagi T."/>
            <person name="Wagatsuma M."/>
            <person name="Shiratori A."/>
            <person name="Sudo H."/>
            <person name="Hosoiri T."/>
            <person name="Kaku Y."/>
            <person name="Kodaira H."/>
            <person name="Kondo H."/>
            <person name="Sugawara M."/>
            <person name="Takahashi M."/>
            <person name="Kanda K."/>
            <person name="Yokoi T."/>
            <person name="Furuya T."/>
            <person name="Kikkawa E."/>
            <person name="Omura Y."/>
            <person name="Abe K."/>
            <person name="Kamihara K."/>
            <person name="Katsuta N."/>
            <person name="Sato K."/>
            <person name="Tanikawa M."/>
            <person name="Yamazaki M."/>
            <person name="Ninomiya K."/>
            <person name="Ishibashi T."/>
            <person name="Yamashita H."/>
            <person name="Murakawa K."/>
            <person name="Fujimori K."/>
            <person name="Tanai H."/>
            <person name="Kimata M."/>
            <person name="Watanabe M."/>
            <person name="Hiraoka S."/>
            <person name="Chiba Y."/>
            <person name="Ishida S."/>
            <person name="Ono Y."/>
            <person name="Takiguchi S."/>
            <person name="Watanabe S."/>
            <person name="Yosida M."/>
            <person name="Hotuta T."/>
            <person name="Kusano J."/>
            <person name="Kanehori K."/>
            <person name="Takahashi-Fujii A."/>
            <person name="Hara H."/>
            <person name="Tanase T.-O."/>
            <person name="Nomura Y."/>
            <person name="Togiya S."/>
            <person name="Komai F."/>
            <person name="Hara R."/>
            <person name="Takeuchi K."/>
            <person name="Arita M."/>
            <person name="Imose N."/>
            <person name="Musashino K."/>
            <person name="Yuuki H."/>
            <person name="Oshima A."/>
            <person name="Sasaki N."/>
            <person name="Aotsuka S."/>
            <person name="Yoshikawa Y."/>
            <person name="Matsunawa H."/>
            <person name="Ichihara T."/>
            <person name="Shiohata N."/>
            <person name="Sano S."/>
            <person name="Moriya S."/>
            <person name="Momiyama H."/>
            <person name="Satoh N."/>
            <person name="Takami S."/>
            <person name="Terashima Y."/>
            <person name="Suzuki O."/>
            <person name="Nakagawa S."/>
            <person name="Senoh A."/>
            <person name="Mizoguchi H."/>
            <person name="Goto Y."/>
            <person name="Shimizu F."/>
            <person name="Wakebe H."/>
            <person name="Hishigaki H."/>
            <person name="Watanabe T."/>
            <person name="Sugiyama A."/>
            <person name="Takemoto M."/>
            <person name="Kawakami B."/>
            <person name="Yamazaki M."/>
            <person name="Watanabe K."/>
            <person name="Kumagai A."/>
            <person name="Itakura S."/>
            <person name="Fukuzumi Y."/>
            <person name="Fujimori Y."/>
            <person name="Komiyama M."/>
            <person name="Tashiro H."/>
            <person name="Tanigami A."/>
            <person name="Fujiwara T."/>
            <person name="Ono T."/>
            <person name="Yamada K."/>
            <person name="Fujii Y."/>
            <person name="Ozaki K."/>
            <person name="Hirao M."/>
            <person name="Ohmori Y."/>
            <person name="Kawabata A."/>
            <person name="Hikiji T."/>
            <person name="Kobatake N."/>
            <person name="Inagaki H."/>
            <person name="Ikema Y."/>
            <person name="Okamoto S."/>
            <person name="Okitani R."/>
            <person name="Kawakami T."/>
            <person name="Noguchi S."/>
            <person name="Itoh T."/>
            <person name="Shigeta K."/>
            <person name="Senba T."/>
            <person name="Matsumura K."/>
            <person name="Nakajima Y."/>
            <person name="Mizuno T."/>
            <person name="Morinaga M."/>
            <person name="Sasaki M."/>
            <person name="Togashi T."/>
            <person name="Oyama M."/>
            <person name="Hata H."/>
            <person name="Watanabe M."/>
            <person name="Komatsu T."/>
            <person name="Mizushima-Sugano J."/>
            <person name="Satoh T."/>
            <person name="Shirai Y."/>
            <person name="Takahashi Y."/>
            <person name="Nakagawa K."/>
            <person name="Okumura K."/>
            <person name="Nagase T."/>
            <person name="Nomura N."/>
            <person name="Kikuchi H."/>
            <person name="Masuho Y."/>
            <person name="Yamashita R."/>
            <person name="Nakai K."/>
            <person name="Yada T."/>
            <person name="Nakamura Y."/>
            <person name="Ohara O."/>
            <person name="Isogai T."/>
            <person name="Sugano S."/>
        </authorList>
    </citation>
    <scope>NUCLEOTIDE SEQUENCE [LARGE SCALE MRNA] (ISOFORMS 1 AND 2)</scope>
    <source>
        <tissue>Brain</tissue>
    </source>
</reference>
<reference key="4">
    <citation type="submission" date="2004-06" db="EMBL/GenBank/DDBJ databases">
        <title>Cloning of human full open reading frames in Gateway(TM) system entry vector (pDONR201).</title>
        <authorList>
            <person name="Ebert L."/>
            <person name="Schick M."/>
            <person name="Neubert P."/>
            <person name="Schatten R."/>
            <person name="Henze S."/>
            <person name="Korn B."/>
        </authorList>
    </citation>
    <scope>NUCLEOTIDE SEQUENCE [LARGE SCALE MRNA] (ISOFORM 1)</scope>
</reference>
<reference key="5">
    <citation type="journal article" date="2006" name="Nature">
        <title>DNA sequence of human chromosome 17 and analysis of rearrangement in the human lineage.</title>
        <authorList>
            <person name="Zody M.C."/>
            <person name="Garber M."/>
            <person name="Adams D.J."/>
            <person name="Sharpe T."/>
            <person name="Harrow J."/>
            <person name="Lupski J.R."/>
            <person name="Nicholson C."/>
            <person name="Searle S.M."/>
            <person name="Wilming L."/>
            <person name="Young S.K."/>
            <person name="Abouelleil A."/>
            <person name="Allen N.R."/>
            <person name="Bi W."/>
            <person name="Bloom T."/>
            <person name="Borowsky M.L."/>
            <person name="Bugalter B.E."/>
            <person name="Butler J."/>
            <person name="Chang J.L."/>
            <person name="Chen C.-K."/>
            <person name="Cook A."/>
            <person name="Corum B."/>
            <person name="Cuomo C.A."/>
            <person name="de Jong P.J."/>
            <person name="DeCaprio D."/>
            <person name="Dewar K."/>
            <person name="FitzGerald M."/>
            <person name="Gilbert J."/>
            <person name="Gibson R."/>
            <person name="Gnerre S."/>
            <person name="Goldstein S."/>
            <person name="Grafham D.V."/>
            <person name="Grocock R."/>
            <person name="Hafez N."/>
            <person name="Hagopian D.S."/>
            <person name="Hart E."/>
            <person name="Norman C.H."/>
            <person name="Humphray S."/>
            <person name="Jaffe D.B."/>
            <person name="Jones M."/>
            <person name="Kamal M."/>
            <person name="Khodiyar V.K."/>
            <person name="LaButti K."/>
            <person name="Laird G."/>
            <person name="Lehoczky J."/>
            <person name="Liu X."/>
            <person name="Lokyitsang T."/>
            <person name="Loveland J."/>
            <person name="Lui A."/>
            <person name="Macdonald P."/>
            <person name="Major J.E."/>
            <person name="Matthews L."/>
            <person name="Mauceli E."/>
            <person name="McCarroll S.A."/>
            <person name="Mihalev A.H."/>
            <person name="Mudge J."/>
            <person name="Nguyen C."/>
            <person name="Nicol R."/>
            <person name="O'Leary S.B."/>
            <person name="Osoegawa K."/>
            <person name="Schwartz D.C."/>
            <person name="Shaw-Smith C."/>
            <person name="Stankiewicz P."/>
            <person name="Steward C."/>
            <person name="Swarbreck D."/>
            <person name="Venkataraman V."/>
            <person name="Whittaker C.A."/>
            <person name="Yang X."/>
            <person name="Zimmer A.R."/>
            <person name="Bradley A."/>
            <person name="Hubbard T."/>
            <person name="Birren B.W."/>
            <person name="Rogers J."/>
            <person name="Lander E.S."/>
            <person name="Nusbaum C."/>
        </authorList>
    </citation>
    <scope>NUCLEOTIDE SEQUENCE [LARGE SCALE GENOMIC DNA]</scope>
</reference>
<reference key="6">
    <citation type="submission" date="2005-09" db="EMBL/GenBank/DDBJ databases">
        <authorList>
            <person name="Mural R.J."/>
            <person name="Istrail S."/>
            <person name="Sutton G."/>
            <person name="Florea L."/>
            <person name="Halpern A.L."/>
            <person name="Mobarry C.M."/>
            <person name="Lippert R."/>
            <person name="Walenz B."/>
            <person name="Shatkay H."/>
            <person name="Dew I."/>
            <person name="Miller J.R."/>
            <person name="Flanigan M.J."/>
            <person name="Edwards N.J."/>
            <person name="Bolanos R."/>
            <person name="Fasulo D."/>
            <person name="Halldorsson B.V."/>
            <person name="Hannenhalli S."/>
            <person name="Turner R."/>
            <person name="Yooseph S."/>
            <person name="Lu F."/>
            <person name="Nusskern D.R."/>
            <person name="Shue B.C."/>
            <person name="Zheng X.H."/>
            <person name="Zhong F."/>
            <person name="Delcher A.L."/>
            <person name="Huson D.H."/>
            <person name="Kravitz S.A."/>
            <person name="Mouchard L."/>
            <person name="Reinert K."/>
            <person name="Remington K.A."/>
            <person name="Clark A.G."/>
            <person name="Waterman M.S."/>
            <person name="Eichler E.E."/>
            <person name="Adams M.D."/>
            <person name="Hunkapiller M.W."/>
            <person name="Myers E.W."/>
            <person name="Venter J.C."/>
        </authorList>
    </citation>
    <scope>NUCLEOTIDE SEQUENCE [LARGE SCALE GENOMIC DNA]</scope>
</reference>
<reference key="7">
    <citation type="journal article" date="2004" name="Genome Res.">
        <title>The status, quality, and expansion of the NIH full-length cDNA project: the Mammalian Gene Collection (MGC).</title>
        <authorList>
            <consortium name="The MGC Project Team"/>
        </authorList>
    </citation>
    <scope>NUCLEOTIDE SEQUENCE [LARGE SCALE MRNA] (ISOFORM 1)</scope>
    <source>
        <tissue>Brain</tissue>
        <tissue>Placenta</tissue>
    </source>
</reference>
<reference key="8">
    <citation type="journal article" date="1990" name="J. Biol. Chem.">
        <title>Carbonic anhydrase IV from human lung. Purification, characterization, and comparison with membrane carbonic anhydrase from human kidney.</title>
        <authorList>
            <person name="Zhu X.L."/>
            <person name="Sly W.S."/>
        </authorList>
    </citation>
    <scope>PROTEIN SEQUENCE OF 19-35; 113-123 AND 233-239</scope>
    <source>
        <tissue>Lung</tissue>
    </source>
</reference>
<reference key="9">
    <citation type="journal article" date="1996" name="Arch. Biochem. Biophys.">
        <title>Carbonic anhydrase IV: purification of a secretory form of the recombinant human enzyme and identification of the positions and importance of its disulfide bonds.</title>
        <authorList>
            <person name="Waheed A."/>
            <person name="Okuyama T."/>
            <person name="Heyduk T."/>
            <person name="Sly W.S."/>
        </authorList>
    </citation>
    <scope>DISULFIDE BONDS</scope>
</reference>
<reference key="10">
    <citation type="journal article" date="1995" name="Arch. Biochem. Biophys.">
        <title>Carbonic anhydrase IV: role of removal of C-terminal domain in glycosylphosphatidylinositol anchoring and realization of enzyme activity.</title>
        <authorList>
            <person name="Okuyama T."/>
            <person name="Waheed A."/>
            <person name="Kusumoto W."/>
            <person name="Zhu X.L."/>
            <person name="Sly W.S."/>
        </authorList>
    </citation>
    <scope>GPI-ANCHOR AT SER-284</scope>
    <scope>MUTAGENESIS OF SER-284</scope>
    <scope>CATALYTIC ACTIVITY</scope>
    <scope>FUNCTION</scope>
</reference>
<reference key="11">
    <citation type="journal article" date="2006" name="Chemistry">
        <title>Carbonic anhydrase activators. Activation of isozymes I, II, IV, VA, VII, and XIV with l- and d-histidine and crystallographic analysis of their adducts with isoform II: engineering proton-transfer processes within the active site of an enzyme.</title>
        <authorList>
            <person name="Temperini C."/>
            <person name="Scozzafava A."/>
            <person name="Vullo D."/>
            <person name="Supuran C.T."/>
        </authorList>
    </citation>
    <scope>ACTIVITY REGULATION</scope>
    <scope>CATALYTIC ACTIVITY</scope>
    <scope>FUNCTION</scope>
</reference>
<reference key="12">
    <citation type="journal article" date="2006" name="J. Med. Chem.">
        <title>Carbonic anhydrase activators. Activation of isoforms I, II, IV, VA, VII, and XIV with L- and D-phenylalanine and crystallographic analysis of their adducts with isozyme II: stereospecific recognition within the active site of an enzyme and its consequences for the drug design.</title>
        <authorList>
            <person name="Temperini C."/>
            <person name="Scozzafava A."/>
            <person name="Vullo D."/>
            <person name="Supuran C.T."/>
        </authorList>
    </citation>
    <scope>ACTIVITY REGULATION</scope>
    <scope>FUNCTION</scope>
    <scope>CATALYTIC ACTIVITY</scope>
</reference>
<reference key="13">
    <citation type="journal article" date="2007" name="Angew. Chem. Int. Ed. Engl.">
        <title>Saccharin inhibits carbonic anhydrases: possible explanation for its unpleasant metallic aftertaste.</title>
        <authorList>
            <person name="Koehler K."/>
            <person name="Hillebrecht A."/>
            <person name="Schulze Wischeler J."/>
            <person name="Innocenti A."/>
            <person name="Heine A."/>
            <person name="Supuran C.T."/>
            <person name="Klebe G."/>
        </authorList>
    </citation>
    <scope>ACTIVITY REGULATION</scope>
    <scope>FUNCTION</scope>
    <scope>CATALYTIC ACTIVITY</scope>
</reference>
<reference key="14">
    <citation type="journal article" date="2007" name="Bioorg. Med. Chem. Lett.">
        <title>Carbonic anhydrase activators: L-Adrenaline plugs the active site entrance of isozyme II, activating better isoforms I, IV, VA, VII, and XIV.</title>
        <authorList>
            <person name="Temperini C."/>
            <person name="Innocenti A."/>
            <person name="Scozzafava A."/>
            <person name="Mastrolorenzo A."/>
            <person name="Supuran C.T."/>
        </authorList>
    </citation>
    <scope>ACTIVITY REGULATION</scope>
    <scope>FUNCTION</scope>
    <scope>CATALYTIC ACTIVITY</scope>
    <scope>ALTERNATIVE SPLICING</scope>
</reference>
<reference key="15">
    <citation type="journal article" date="2007" name="Bioorg. Med. Chem. Lett.">
        <title>Phosph(on)ate as a zinc-binding group in metalloenzyme inhibitors: X-ray crystal structure of the antiviral drug foscarnet complexed to human carbonic anhydrase I.</title>
        <authorList>
            <person name="Temperini C."/>
            <person name="Innocenti A."/>
            <person name="Guerri A."/>
            <person name="Scozzafava A."/>
            <person name="Rusconi S."/>
            <person name="Supuran C.T."/>
        </authorList>
    </citation>
    <scope>ACTIVITY REGULATION</scope>
    <scope>FUNCTION</scope>
    <scope>CATALYTIC ACTIVITY</scope>
</reference>
<reference key="16">
    <citation type="journal article" date="2009" name="Bioorg. Med. Chem. Lett.">
        <title>A thiabendazole sulfonamide shows potent inhibitory activity against mammalian and nematode alpha-carbonic anhydrases.</title>
        <authorList>
            <person name="Crocetti L."/>
            <person name="Maresca A."/>
            <person name="Temperini C."/>
            <person name="Hall R.A."/>
            <person name="Scozzafava A."/>
            <person name="Muehlschlegel F.A."/>
            <person name="Supuran C.T."/>
        </authorList>
    </citation>
    <scope>ACTIVITY REGULATION</scope>
    <scope>CATALYTIC ACTIVITY</scope>
</reference>
<reference key="17">
    <citation type="journal article" date="2009" name="J. Am. Chem. Soc.">
        <title>Non-zinc mediated inhibition of carbonic anhydrases: coumarins are a new class of suicide inhibitors.</title>
        <authorList>
            <person name="Maresca A."/>
            <person name="Temperini C."/>
            <person name="Vu H."/>
            <person name="Pham N.B."/>
            <person name="Poulsen S.-A."/>
            <person name="Scozzafava A."/>
            <person name="Quinn R.J."/>
            <person name="Supuran C.T."/>
        </authorList>
    </citation>
    <scope>ACTIVITY REGULATION</scope>
    <scope>FUNCTION</scope>
    <scope>CATALYTIC ACTIVITY</scope>
</reference>
<reference key="18">
    <citation type="journal article" date="2009" name="Proteins">
        <title>Crystal structure of human carbonic anhydrase XIII and its complex with the inhibitor acetazolamide.</title>
        <authorList>
            <person name="Di Fiore A."/>
            <person name="Monti S.M."/>
            <person name="Hilvo M."/>
            <person name="Parkkila S."/>
            <person name="Romano V."/>
            <person name="Scaloni A."/>
            <person name="Pedone C."/>
            <person name="Scozzafava A."/>
            <person name="Supuran C.T."/>
            <person name="De Simone G."/>
        </authorList>
    </citation>
    <scope>CATALYTIC ACTIVITY</scope>
    <scope>BIOPHYSICOCHEMICAL PROPERTIES</scope>
    <scope>ACTIVITY REGULATION</scope>
    <scope>FUNCTION</scope>
</reference>
<reference key="19">
    <citation type="journal article" date="1996" name="Proc. Natl. Acad. Sci. U.S.A.">
        <title>Crystal structure of the secretory form of membrane-associated human carbonic anhydrase IV at 2.8-A resolution.</title>
        <authorList>
            <person name="Stams T."/>
            <person name="Nair S.K."/>
            <person name="Okuyama T."/>
            <person name="Waheed A."/>
            <person name="Sly W.S."/>
            <person name="Christianson D.W."/>
        </authorList>
    </citation>
    <scope>X-RAY CRYSTALLOGRAPHY (2.80 ANGSTROMS) OF 19-284 IN COMPLEX WITH ZINC ION</scope>
</reference>
<reference key="20">
    <citation type="journal article" date="2010" name="Bioorg. Med. Chem.">
        <title>Thioether benzenesulfonamide inhibitors of carbonic anhydrases II and IV: structure-based drug design, synthesis, and biological evaluation.</title>
        <authorList>
            <person name="Vernier W.F."/>
            <person name="Chong W."/>
            <person name="Rewolinski D."/>
            <person name="Greasley S."/>
            <person name="Pauly T.A."/>
            <person name="Shaw M."/>
            <person name="Dinh D.M."/>
            <person name="Ferre R.A.A."/>
            <person name="Meador J.W. III"/>
            <person name="Nukui S."/>
            <person name="Ornelas M."/>
            <person name="Paz R.L."/>
            <person name="Reyner E."/>
        </authorList>
    </citation>
    <scope>X-RAY CRYSTALLOGRAPHY (2.00 ANGSTROMS) OF 19-284 IN COMPLEX WITH INHIBITORS</scope>
</reference>
<reference key="21">
    <citation type="journal article" date="2005" name="Hum. Mol. Genet.">
        <title>Mutant carbonic anhydrase 4 impairs pH regulation and causes retinal photoreceptor degeneration.</title>
        <authorList>
            <person name="Yang Z."/>
            <person name="Alvarez B.V."/>
            <person name="Chakarova C."/>
            <person name="Jiang L."/>
            <person name="Karan G."/>
            <person name="Frederick J.M."/>
            <person name="Zhao Y."/>
            <person name="Sauve Y."/>
            <person name="Li X."/>
            <person name="Zrenner E."/>
            <person name="Wissinger B."/>
            <person name="Den Hollander A.I."/>
            <person name="Katz B."/>
            <person name="Baehr W."/>
            <person name="Cremers F.P."/>
            <person name="Casey J.R."/>
            <person name="Bhattacharya S.S."/>
            <person name="Zhang K."/>
        </authorList>
    </citation>
    <scope>INVOLVEMENT IN RP17</scope>
    <scope>VARIANTS RP17 TRP-14 AND SER-219</scope>
    <scope>FUNCTION</scope>
    <scope>CATALYTIC ACTIVITY</scope>
    <scope>TISSUE SPECIFICITY</scope>
    <scope>INTERACTION WITH SLC4A4</scope>
    <scope>SUBCELLULAR LOCATION</scope>
</reference>
<reference key="22">
    <citation type="journal article" date="2007" name="Invest. Ophthalmol. Vis. Sci.">
        <title>Identification and characterization of a novel mutation in the carbonic anhydrase IV gene that causes retinitis pigmentosa.</title>
        <authorList>
            <person name="Alvarez B.V."/>
            <person name="Vithana E.N."/>
            <person name="Yang Z."/>
            <person name="Koh A.H."/>
            <person name="Yeung K."/>
            <person name="Yong V."/>
            <person name="Shandro H.J."/>
            <person name="Chen Y."/>
            <person name="Kolatkar P."/>
            <person name="Palasingam P."/>
            <person name="Zhang K."/>
            <person name="Aung T."/>
            <person name="Casey J.R."/>
        </authorList>
    </citation>
    <scope>INTERACTION WITH SLC4A4</scope>
    <scope>VARIANT RP17 HIS-69</scope>
    <scope>VARIANT LYS-177</scope>
    <scope>CHARACTERIZATION OF VARIANT RP17 HIS-69</scope>
    <scope>FUNCTION</scope>
    <scope>CATALYTIC ACTIVITY</scope>
</reference>
<reference key="23">
    <citation type="journal article" date="2010" name="Curr. Eye Res.">
        <title>Screening for the carbonic anhydrase IV gene mutations in Chinese retinitis pigmentosa patients.</title>
        <authorList>
            <person name="Tian Y."/>
            <person name="Tang L."/>
            <person name="Cui J."/>
            <person name="Zhu X."/>
        </authorList>
    </citation>
    <scope>VARIANT RP17 THR-12</scope>
</reference>